<feature type="chain" id="PRO_1000084007" description="Transcriptional regulator MraZ">
    <location>
        <begin position="1"/>
        <end position="152"/>
    </location>
</feature>
<feature type="domain" description="SpoVT-AbrB 1" evidence="2">
    <location>
        <begin position="5"/>
        <end position="52"/>
    </location>
</feature>
<feature type="domain" description="SpoVT-AbrB 2" evidence="2">
    <location>
        <begin position="81"/>
        <end position="124"/>
    </location>
</feature>
<protein>
    <recommendedName>
        <fullName>Transcriptional regulator MraZ</fullName>
    </recommendedName>
</protein>
<comment type="subunit">
    <text evidence="1">Forms oligomers.</text>
</comment>
<comment type="subcellular location">
    <subcellularLocation>
        <location evidence="1">Cytoplasm</location>
        <location evidence="1">Nucleoid</location>
    </subcellularLocation>
</comment>
<comment type="similarity">
    <text evidence="1">Belongs to the MraZ family.</text>
</comment>
<reference key="1">
    <citation type="submission" date="2008-02" db="EMBL/GenBank/DDBJ databases">
        <title>Complete sequence of Haemophilus somnus 2336.</title>
        <authorList>
            <consortium name="US DOE Joint Genome Institute"/>
            <person name="Siddaramappa S."/>
            <person name="Duncan A.J."/>
            <person name="Challacombe J.F."/>
            <person name="Rainey D."/>
            <person name="Gillaspy A.F."/>
            <person name="Carson M."/>
            <person name="Gipson J."/>
            <person name="Gipson M."/>
            <person name="Bruce D."/>
            <person name="Detter J.C."/>
            <person name="Han C.S."/>
            <person name="Land M."/>
            <person name="Tapia R."/>
            <person name="Thompson L.S."/>
            <person name="Orvis J."/>
            <person name="Zaitshik J."/>
            <person name="Barnes G."/>
            <person name="Brettin T.S."/>
            <person name="Dyer D.W."/>
            <person name="Inzana T.J."/>
        </authorList>
    </citation>
    <scope>NUCLEOTIDE SEQUENCE [LARGE SCALE GENOMIC DNA]</scope>
    <source>
        <strain>2336</strain>
    </source>
</reference>
<organism>
    <name type="scientific">Histophilus somni (strain 2336)</name>
    <name type="common">Haemophilus somnus</name>
    <dbReference type="NCBI Taxonomy" id="228400"/>
    <lineage>
        <taxon>Bacteria</taxon>
        <taxon>Pseudomonadati</taxon>
        <taxon>Pseudomonadota</taxon>
        <taxon>Gammaproteobacteria</taxon>
        <taxon>Pasteurellales</taxon>
        <taxon>Pasteurellaceae</taxon>
        <taxon>Histophilus</taxon>
    </lineage>
</organism>
<keyword id="KW-0963">Cytoplasm</keyword>
<keyword id="KW-0238">DNA-binding</keyword>
<keyword id="KW-0677">Repeat</keyword>
<keyword id="KW-0804">Transcription</keyword>
<keyword id="KW-0805">Transcription regulation</keyword>
<proteinExistence type="inferred from homology"/>
<evidence type="ECO:0000255" key="1">
    <source>
        <dbReference type="HAMAP-Rule" id="MF_01008"/>
    </source>
</evidence>
<evidence type="ECO:0000255" key="2">
    <source>
        <dbReference type="PROSITE-ProRule" id="PRU01076"/>
    </source>
</evidence>
<dbReference type="EMBL" id="CP000947">
    <property type="protein sequence ID" value="ACA32273.1"/>
    <property type="molecule type" value="Genomic_DNA"/>
</dbReference>
<dbReference type="RefSeq" id="WP_012341444.1">
    <property type="nucleotide sequence ID" value="NC_010519.1"/>
</dbReference>
<dbReference type="SMR" id="B0US58"/>
<dbReference type="STRING" id="228400.HSM_0619"/>
<dbReference type="GeneID" id="31486900"/>
<dbReference type="KEGG" id="hsm:HSM_0619"/>
<dbReference type="HOGENOM" id="CLU_107907_2_0_6"/>
<dbReference type="GO" id="GO:0005737">
    <property type="term" value="C:cytoplasm"/>
    <property type="evidence" value="ECO:0007669"/>
    <property type="project" value="UniProtKB-UniRule"/>
</dbReference>
<dbReference type="GO" id="GO:0009295">
    <property type="term" value="C:nucleoid"/>
    <property type="evidence" value="ECO:0007669"/>
    <property type="project" value="UniProtKB-SubCell"/>
</dbReference>
<dbReference type="GO" id="GO:0003700">
    <property type="term" value="F:DNA-binding transcription factor activity"/>
    <property type="evidence" value="ECO:0007669"/>
    <property type="project" value="UniProtKB-UniRule"/>
</dbReference>
<dbReference type="GO" id="GO:0000976">
    <property type="term" value="F:transcription cis-regulatory region binding"/>
    <property type="evidence" value="ECO:0007669"/>
    <property type="project" value="TreeGrafter"/>
</dbReference>
<dbReference type="GO" id="GO:2000143">
    <property type="term" value="P:negative regulation of DNA-templated transcription initiation"/>
    <property type="evidence" value="ECO:0007669"/>
    <property type="project" value="TreeGrafter"/>
</dbReference>
<dbReference type="CDD" id="cd16321">
    <property type="entry name" value="MraZ_C"/>
    <property type="match status" value="1"/>
</dbReference>
<dbReference type="CDD" id="cd16320">
    <property type="entry name" value="MraZ_N"/>
    <property type="match status" value="1"/>
</dbReference>
<dbReference type="FunFam" id="3.40.1550.20:FF:000001">
    <property type="entry name" value="Transcriptional regulator MraZ"/>
    <property type="match status" value="1"/>
</dbReference>
<dbReference type="Gene3D" id="3.40.1550.20">
    <property type="entry name" value="Transcriptional regulator MraZ domain"/>
    <property type="match status" value="1"/>
</dbReference>
<dbReference type="HAMAP" id="MF_01008">
    <property type="entry name" value="MraZ"/>
    <property type="match status" value="1"/>
</dbReference>
<dbReference type="InterPro" id="IPR003444">
    <property type="entry name" value="MraZ"/>
</dbReference>
<dbReference type="InterPro" id="IPR035644">
    <property type="entry name" value="MraZ_C"/>
</dbReference>
<dbReference type="InterPro" id="IPR020603">
    <property type="entry name" value="MraZ_dom"/>
</dbReference>
<dbReference type="InterPro" id="IPR035642">
    <property type="entry name" value="MraZ_N"/>
</dbReference>
<dbReference type="InterPro" id="IPR038619">
    <property type="entry name" value="MraZ_sf"/>
</dbReference>
<dbReference type="InterPro" id="IPR007159">
    <property type="entry name" value="SpoVT-AbrB_dom"/>
</dbReference>
<dbReference type="InterPro" id="IPR037914">
    <property type="entry name" value="SpoVT-AbrB_sf"/>
</dbReference>
<dbReference type="NCBIfam" id="TIGR00242">
    <property type="entry name" value="division/cell wall cluster transcriptional repressor MraZ"/>
    <property type="match status" value="1"/>
</dbReference>
<dbReference type="PANTHER" id="PTHR34701">
    <property type="entry name" value="TRANSCRIPTIONAL REGULATOR MRAZ"/>
    <property type="match status" value="1"/>
</dbReference>
<dbReference type="PANTHER" id="PTHR34701:SF1">
    <property type="entry name" value="TRANSCRIPTIONAL REGULATOR MRAZ"/>
    <property type="match status" value="1"/>
</dbReference>
<dbReference type="Pfam" id="PF02381">
    <property type="entry name" value="MraZ"/>
    <property type="match status" value="2"/>
</dbReference>
<dbReference type="SUPFAM" id="SSF89447">
    <property type="entry name" value="AbrB/MazE/MraZ-like"/>
    <property type="match status" value="1"/>
</dbReference>
<dbReference type="PROSITE" id="PS51740">
    <property type="entry name" value="SPOVT_ABRB"/>
    <property type="match status" value="2"/>
</dbReference>
<gene>
    <name evidence="1" type="primary">mraZ</name>
    <name type="ordered locus">HSM_0619</name>
</gene>
<sequence>MFRGASAVNLDSKGRIAIPTRYRPEILEINQGQMVCTVDIRQPCLLLYPLNQWEIIEQKLSKLSNFNPEERSLQRVMLGYATECELDSAGRILISAPLRQHAKLEKSIMLVGQLNKFEIWSESEWQAQIEKDMTLGASGQFAMSEALSMLSL</sequence>
<name>MRAZ_HISS2</name>
<accession>B0US58</accession>